<reference key="1">
    <citation type="journal article" date="2008" name="PLoS ONE">
        <title>An optimized chloroplast DNA extraction protocol for grasses (Poaceae) proves suitable for whole plastid genome sequencing and SNP detection.</title>
        <authorList>
            <person name="Diekmann K."/>
            <person name="Hodkinson T.R."/>
            <person name="Fricke E."/>
            <person name="Barth S."/>
        </authorList>
    </citation>
    <scope>NUCLEOTIDE SEQUENCE [LARGE SCALE GENOMIC DNA]</scope>
    <source>
        <strain>cv. Cashel</strain>
    </source>
</reference>
<name>PSBI_LOLPR</name>
<evidence type="ECO:0000255" key="1">
    <source>
        <dbReference type="HAMAP-Rule" id="MF_01316"/>
    </source>
</evidence>
<proteinExistence type="inferred from homology"/>
<sequence>MLTLKLFVYTVVIFFVSLFIFGFLSNDPGRNPGREE</sequence>
<geneLocation type="chloroplast"/>
<organism>
    <name type="scientific">Lolium perenne</name>
    <name type="common">Perennial ryegrass</name>
    <dbReference type="NCBI Taxonomy" id="4522"/>
    <lineage>
        <taxon>Eukaryota</taxon>
        <taxon>Viridiplantae</taxon>
        <taxon>Streptophyta</taxon>
        <taxon>Embryophyta</taxon>
        <taxon>Tracheophyta</taxon>
        <taxon>Spermatophyta</taxon>
        <taxon>Magnoliopsida</taxon>
        <taxon>Liliopsida</taxon>
        <taxon>Poales</taxon>
        <taxon>Poaceae</taxon>
        <taxon>BOP clade</taxon>
        <taxon>Pooideae</taxon>
        <taxon>Poodae</taxon>
        <taxon>Poeae</taxon>
        <taxon>Poeae Chloroplast Group 2 (Poeae type)</taxon>
        <taxon>Loliodinae</taxon>
        <taxon>Loliinae</taxon>
        <taxon>Lolium</taxon>
    </lineage>
</organism>
<gene>
    <name evidence="1" type="primary">psbI</name>
    <name type="ordered locus">LopeCp007</name>
</gene>
<protein>
    <recommendedName>
        <fullName evidence="1">Photosystem II reaction center protein I</fullName>
        <shortName evidence="1">PSII-I</shortName>
    </recommendedName>
    <alternativeName>
        <fullName evidence="1">PSII 4.8 kDa protein</fullName>
    </alternativeName>
</protein>
<comment type="function">
    <text evidence="1">One of the components of the core complex of photosystem II (PSII), required for its stability and/or assembly. PSII is a light-driven water:plastoquinone oxidoreductase that uses light energy to abstract electrons from H(2)O, generating O(2) and a proton gradient subsequently used for ATP formation. It consists of a core antenna complex that captures photons, and an electron transfer chain that converts photonic excitation into a charge separation.</text>
</comment>
<comment type="subunit">
    <text evidence="1">PSII is composed of 1 copy each of membrane proteins PsbA, PsbB, PsbC, PsbD, PsbE, PsbF, PsbH, PsbI, PsbJ, PsbK, PsbL, PsbM, PsbT, PsbX, PsbY, PsbZ, Psb30/Ycf12, at least 3 peripheral proteins of the oxygen-evolving complex and a large number of cofactors. It forms dimeric complexes.</text>
</comment>
<comment type="subcellular location">
    <subcellularLocation>
        <location evidence="1">Plastid</location>
        <location evidence="1">Chloroplast thylakoid membrane</location>
        <topology evidence="1">Single-pass membrane protein</topology>
    </subcellularLocation>
</comment>
<comment type="similarity">
    <text evidence="1">Belongs to the PsbI family.</text>
</comment>
<feature type="chain" id="PRO_0000353237" description="Photosystem II reaction center protein I">
    <location>
        <begin position="1"/>
        <end position="36"/>
    </location>
</feature>
<feature type="transmembrane region" description="Helical" evidence="1">
    <location>
        <begin position="4"/>
        <end position="24"/>
    </location>
</feature>
<keyword id="KW-0150">Chloroplast</keyword>
<keyword id="KW-0472">Membrane</keyword>
<keyword id="KW-0602">Photosynthesis</keyword>
<keyword id="KW-0604">Photosystem II</keyword>
<keyword id="KW-0934">Plastid</keyword>
<keyword id="KW-0674">Reaction center</keyword>
<keyword id="KW-0793">Thylakoid</keyword>
<keyword id="KW-0812">Transmembrane</keyword>
<keyword id="KW-1133">Transmembrane helix</keyword>
<accession>A8Y9F4</accession>
<dbReference type="EMBL" id="AM777385">
    <property type="protein sequence ID" value="CAO85960.1"/>
    <property type="molecule type" value="Genomic_DNA"/>
</dbReference>
<dbReference type="RefSeq" id="YP_001531267.1">
    <property type="nucleotide sequence ID" value="NC_009950.1"/>
</dbReference>
<dbReference type="SMR" id="A8Y9F4"/>
<dbReference type="GeneID" id="5696633"/>
<dbReference type="KEGG" id="lper:5696633"/>
<dbReference type="GO" id="GO:0009535">
    <property type="term" value="C:chloroplast thylakoid membrane"/>
    <property type="evidence" value="ECO:0007669"/>
    <property type="project" value="UniProtKB-SubCell"/>
</dbReference>
<dbReference type="GO" id="GO:0009539">
    <property type="term" value="C:photosystem II reaction center"/>
    <property type="evidence" value="ECO:0007669"/>
    <property type="project" value="InterPro"/>
</dbReference>
<dbReference type="GO" id="GO:0015979">
    <property type="term" value="P:photosynthesis"/>
    <property type="evidence" value="ECO:0007669"/>
    <property type="project" value="UniProtKB-UniRule"/>
</dbReference>
<dbReference type="HAMAP" id="MF_01316">
    <property type="entry name" value="PSII_PsbI"/>
    <property type="match status" value="1"/>
</dbReference>
<dbReference type="InterPro" id="IPR003686">
    <property type="entry name" value="PSII_PsbI"/>
</dbReference>
<dbReference type="InterPro" id="IPR037271">
    <property type="entry name" value="PSII_PsbI_sf"/>
</dbReference>
<dbReference type="NCBIfam" id="NF002735">
    <property type="entry name" value="PRK02655.1"/>
    <property type="match status" value="1"/>
</dbReference>
<dbReference type="PANTHER" id="PTHR35772">
    <property type="entry name" value="PHOTOSYSTEM II REACTION CENTER PROTEIN I"/>
    <property type="match status" value="1"/>
</dbReference>
<dbReference type="PANTHER" id="PTHR35772:SF1">
    <property type="entry name" value="PHOTOSYSTEM II REACTION CENTER PROTEIN I"/>
    <property type="match status" value="1"/>
</dbReference>
<dbReference type="Pfam" id="PF02532">
    <property type="entry name" value="PsbI"/>
    <property type="match status" value="1"/>
</dbReference>
<dbReference type="SUPFAM" id="SSF161041">
    <property type="entry name" value="Photosystem II reaction center protein I, PsbI"/>
    <property type="match status" value="1"/>
</dbReference>